<feature type="chain" id="PRO_1000164733" description="Deoxyguanosinetriphosphate triphosphohydrolase-like protein">
    <location>
        <begin position="1"/>
        <end position="396"/>
    </location>
</feature>
<feature type="domain" description="HD" evidence="2">
    <location>
        <begin position="62"/>
        <end position="198"/>
    </location>
</feature>
<reference key="1">
    <citation type="submission" date="2006-02" db="EMBL/GenBank/DDBJ databases">
        <title>Complete sequence of chromosome of Jannaschia sp. CCS1.</title>
        <authorList>
            <consortium name="US DOE Joint Genome Institute"/>
            <person name="Copeland A."/>
            <person name="Lucas S."/>
            <person name="Lapidus A."/>
            <person name="Barry K."/>
            <person name="Detter J.C."/>
            <person name="Glavina del Rio T."/>
            <person name="Hammon N."/>
            <person name="Israni S."/>
            <person name="Pitluck S."/>
            <person name="Brettin T."/>
            <person name="Bruce D."/>
            <person name="Han C."/>
            <person name="Tapia R."/>
            <person name="Gilna P."/>
            <person name="Chertkov O."/>
            <person name="Saunders E."/>
            <person name="Schmutz J."/>
            <person name="Larimer F."/>
            <person name="Land M."/>
            <person name="Kyrpides N."/>
            <person name="Lykidis A."/>
            <person name="Moran M.A."/>
            <person name="Belas R."/>
            <person name="Ye W."/>
            <person name="Buchan A."/>
            <person name="Gonzalez J.M."/>
            <person name="Schell M.A."/>
            <person name="Richardson P."/>
        </authorList>
    </citation>
    <scope>NUCLEOTIDE SEQUENCE [LARGE SCALE GENOMIC DNA]</scope>
    <source>
        <strain>CCS1</strain>
    </source>
</reference>
<name>DGTL1_JANSC</name>
<proteinExistence type="inferred from homology"/>
<comment type="similarity">
    <text evidence="1">Belongs to the dGTPase family. Type 2 subfamily.</text>
</comment>
<gene>
    <name type="ordered locus">Jann_1505</name>
</gene>
<organism>
    <name type="scientific">Jannaschia sp. (strain CCS1)</name>
    <dbReference type="NCBI Taxonomy" id="290400"/>
    <lineage>
        <taxon>Bacteria</taxon>
        <taxon>Pseudomonadati</taxon>
        <taxon>Pseudomonadota</taxon>
        <taxon>Alphaproteobacteria</taxon>
        <taxon>Rhodobacterales</taxon>
        <taxon>Roseobacteraceae</taxon>
        <taxon>Jannaschia</taxon>
    </lineage>
</organism>
<sequence>MRAAYACDPMATRGRAVVEEESAHRSPFQRDRDRIIHSSAFRRLKHKTQVFVEHEGDYFRTRLTHSLEVAQVARTMARALGLDEDLTETVALAHDLGHPPFGHTGEDALSALMAPYGGYDHNAQALRIVTHLERHYAEFDGLNLTWETLEGIAKHNGPVAAPLPWALEASCADINLELSTHASAEAQVAALADDIAYNHHDLHDGLRAELFSTDELAGLPILKGCFAAVDQRYPGLNYYRRRHEALRRFFGVLVEDVLANARAALAEINPQSAMDIRNAGRPIIRFSNGLFADLQVIRTFLFKRMYRAPSVVEMRTQVTQVVEDLFPFFLETPSELPRQWRKDVEDVAGDATQLARIVSDYISGMTDRFALQCHQRLIGGAQDGTVTGPSTLNFGA</sequence>
<keyword id="KW-0378">Hydrolase</keyword>
<keyword id="KW-1185">Reference proteome</keyword>
<accession>Q28S90</accession>
<protein>
    <recommendedName>
        <fullName evidence="1">Deoxyguanosinetriphosphate triphosphohydrolase-like protein</fullName>
    </recommendedName>
</protein>
<evidence type="ECO:0000255" key="1">
    <source>
        <dbReference type="HAMAP-Rule" id="MF_01212"/>
    </source>
</evidence>
<evidence type="ECO:0000255" key="2">
    <source>
        <dbReference type="PROSITE-ProRule" id="PRU01175"/>
    </source>
</evidence>
<dbReference type="EMBL" id="CP000264">
    <property type="protein sequence ID" value="ABD54422.1"/>
    <property type="molecule type" value="Genomic_DNA"/>
</dbReference>
<dbReference type="RefSeq" id="WP_011454629.1">
    <property type="nucleotide sequence ID" value="NC_007802.1"/>
</dbReference>
<dbReference type="SMR" id="Q28S90"/>
<dbReference type="STRING" id="290400.Jann_1505"/>
<dbReference type="KEGG" id="jan:Jann_1505"/>
<dbReference type="eggNOG" id="COG0232">
    <property type="taxonomic scope" value="Bacteria"/>
</dbReference>
<dbReference type="HOGENOM" id="CLU_028163_1_0_5"/>
<dbReference type="OrthoDB" id="9803619at2"/>
<dbReference type="Proteomes" id="UP000008326">
    <property type="component" value="Chromosome"/>
</dbReference>
<dbReference type="GO" id="GO:0008832">
    <property type="term" value="F:dGTPase activity"/>
    <property type="evidence" value="ECO:0007669"/>
    <property type="project" value="TreeGrafter"/>
</dbReference>
<dbReference type="GO" id="GO:0006203">
    <property type="term" value="P:dGTP catabolic process"/>
    <property type="evidence" value="ECO:0007669"/>
    <property type="project" value="TreeGrafter"/>
</dbReference>
<dbReference type="CDD" id="cd00077">
    <property type="entry name" value="HDc"/>
    <property type="match status" value="1"/>
</dbReference>
<dbReference type="Gene3D" id="1.10.3210.10">
    <property type="entry name" value="Hypothetical protein af1432"/>
    <property type="match status" value="1"/>
</dbReference>
<dbReference type="HAMAP" id="MF_01212">
    <property type="entry name" value="dGTPase_type2"/>
    <property type="match status" value="1"/>
</dbReference>
<dbReference type="InterPro" id="IPR006261">
    <property type="entry name" value="dGTPase"/>
</dbReference>
<dbReference type="InterPro" id="IPR050135">
    <property type="entry name" value="dGTPase-like"/>
</dbReference>
<dbReference type="InterPro" id="IPR023023">
    <property type="entry name" value="dNTPase_2"/>
</dbReference>
<dbReference type="InterPro" id="IPR003607">
    <property type="entry name" value="HD/PDEase_dom"/>
</dbReference>
<dbReference type="InterPro" id="IPR006674">
    <property type="entry name" value="HD_domain"/>
</dbReference>
<dbReference type="InterPro" id="IPR026875">
    <property type="entry name" value="PHydrolase_assoc_dom"/>
</dbReference>
<dbReference type="NCBIfam" id="TIGR01353">
    <property type="entry name" value="dGTP_triPase"/>
    <property type="match status" value="1"/>
</dbReference>
<dbReference type="NCBIfam" id="NF002326">
    <property type="entry name" value="PRK01286.1-1"/>
    <property type="match status" value="1"/>
</dbReference>
<dbReference type="NCBIfam" id="NF002328">
    <property type="entry name" value="PRK01286.1-3"/>
    <property type="match status" value="1"/>
</dbReference>
<dbReference type="PANTHER" id="PTHR11373:SF43">
    <property type="entry name" value="DEOXYGUANOSINETRIPHOSPHATE TRIPHOSPHOHYDROLASE-LIKE PROTEIN"/>
    <property type="match status" value="1"/>
</dbReference>
<dbReference type="PANTHER" id="PTHR11373">
    <property type="entry name" value="DEOXYNUCLEOSIDE TRIPHOSPHATE TRIPHOSPHOHYDROLASE"/>
    <property type="match status" value="1"/>
</dbReference>
<dbReference type="Pfam" id="PF01966">
    <property type="entry name" value="HD"/>
    <property type="match status" value="1"/>
</dbReference>
<dbReference type="Pfam" id="PF13286">
    <property type="entry name" value="HD_assoc"/>
    <property type="match status" value="1"/>
</dbReference>
<dbReference type="SMART" id="SM00471">
    <property type="entry name" value="HDc"/>
    <property type="match status" value="1"/>
</dbReference>
<dbReference type="SUPFAM" id="SSF109604">
    <property type="entry name" value="HD-domain/PDEase-like"/>
    <property type="match status" value="1"/>
</dbReference>
<dbReference type="PROSITE" id="PS51831">
    <property type="entry name" value="HD"/>
    <property type="match status" value="1"/>
</dbReference>